<protein>
    <recommendedName>
        <fullName evidence="1">Adenylosuccinate synthetase</fullName>
        <shortName evidence="1">AMPSase</shortName>
        <shortName evidence="1">AdSS</shortName>
        <ecNumber evidence="1">6.3.4.4</ecNumber>
    </recommendedName>
    <alternativeName>
        <fullName evidence="1">IMP--aspartate ligase</fullName>
    </alternativeName>
</protein>
<proteinExistence type="inferred from homology"/>
<name>PURA_XANOP</name>
<organism>
    <name type="scientific">Xanthomonas oryzae pv. oryzae (strain PXO99A)</name>
    <dbReference type="NCBI Taxonomy" id="360094"/>
    <lineage>
        <taxon>Bacteria</taxon>
        <taxon>Pseudomonadati</taxon>
        <taxon>Pseudomonadota</taxon>
        <taxon>Gammaproteobacteria</taxon>
        <taxon>Lysobacterales</taxon>
        <taxon>Lysobacteraceae</taxon>
        <taxon>Xanthomonas</taxon>
    </lineage>
</organism>
<accession>B2SNJ3</accession>
<evidence type="ECO:0000255" key="1">
    <source>
        <dbReference type="HAMAP-Rule" id="MF_00011"/>
    </source>
</evidence>
<gene>
    <name evidence="1" type="primary">purA</name>
    <name type="ordered locus">PXO_02633</name>
</gene>
<sequence length="430" mass="46236">MGQSVVVLGAQWGDEGKGKIVDLLTEEIGAVVRFQGGHNAGHTLVINGKKTVLHLIPSGILRDDALCLIGNGVVISPAALIKEVSELEDAGVEVRSRLKISPAAPLIMPYHIALDQAREKAAGGKAIGTTGRGIGPAYEDKVARRGIRIADLHYPPQLEELLRTALDYHNFVLTKYLGVEAVDFQKTYDEALAFGDYVQPMKSDVAGILHDLRKQGKRVLFEGAQGALLDIDHGTYPYVTSSNTTVGGALAGTGVGADAIDYVLGIAKAYATRVGGGPFPTELDDEVGQGIRDRGAEYGASTGRPRRCGWMDIVALKRAVAINGISGLCITKLDVLDGMEKLKVCIAYEYRGKRTEYAPLDAQGWEECTPVYLEFPGWTENTHGITEWDKLPVAARAYLRALEELAGCPISIVSTGPDRDHTMVLQDPFA</sequence>
<feature type="chain" id="PRO_1000089353" description="Adenylosuccinate synthetase">
    <location>
        <begin position="1"/>
        <end position="430"/>
    </location>
</feature>
<feature type="active site" description="Proton acceptor" evidence="1">
    <location>
        <position position="14"/>
    </location>
</feature>
<feature type="active site" description="Proton donor" evidence="1">
    <location>
        <position position="42"/>
    </location>
</feature>
<feature type="binding site" evidence="1">
    <location>
        <begin position="13"/>
        <end position="19"/>
    </location>
    <ligand>
        <name>GTP</name>
        <dbReference type="ChEBI" id="CHEBI:37565"/>
    </ligand>
</feature>
<feature type="binding site" description="in other chain" evidence="1">
    <location>
        <begin position="14"/>
        <end position="17"/>
    </location>
    <ligand>
        <name>IMP</name>
        <dbReference type="ChEBI" id="CHEBI:58053"/>
        <note>ligand shared between dimeric partners</note>
    </ligand>
</feature>
<feature type="binding site" evidence="1">
    <location>
        <position position="14"/>
    </location>
    <ligand>
        <name>Mg(2+)</name>
        <dbReference type="ChEBI" id="CHEBI:18420"/>
    </ligand>
</feature>
<feature type="binding site" description="in other chain" evidence="1">
    <location>
        <begin position="39"/>
        <end position="42"/>
    </location>
    <ligand>
        <name>IMP</name>
        <dbReference type="ChEBI" id="CHEBI:58053"/>
        <note>ligand shared between dimeric partners</note>
    </ligand>
</feature>
<feature type="binding site" evidence="1">
    <location>
        <begin position="41"/>
        <end position="43"/>
    </location>
    <ligand>
        <name>GTP</name>
        <dbReference type="ChEBI" id="CHEBI:37565"/>
    </ligand>
</feature>
<feature type="binding site" evidence="1">
    <location>
        <position position="41"/>
    </location>
    <ligand>
        <name>Mg(2+)</name>
        <dbReference type="ChEBI" id="CHEBI:18420"/>
    </ligand>
</feature>
<feature type="binding site" description="in other chain" evidence="1">
    <location>
        <position position="130"/>
    </location>
    <ligand>
        <name>IMP</name>
        <dbReference type="ChEBI" id="CHEBI:58053"/>
        <note>ligand shared between dimeric partners</note>
    </ligand>
</feature>
<feature type="binding site" evidence="1">
    <location>
        <position position="144"/>
    </location>
    <ligand>
        <name>IMP</name>
        <dbReference type="ChEBI" id="CHEBI:58053"/>
        <note>ligand shared between dimeric partners</note>
    </ligand>
</feature>
<feature type="binding site" description="in other chain" evidence="1">
    <location>
        <position position="225"/>
    </location>
    <ligand>
        <name>IMP</name>
        <dbReference type="ChEBI" id="CHEBI:58053"/>
        <note>ligand shared between dimeric partners</note>
    </ligand>
</feature>
<feature type="binding site" description="in other chain" evidence="1">
    <location>
        <position position="240"/>
    </location>
    <ligand>
        <name>IMP</name>
        <dbReference type="ChEBI" id="CHEBI:58053"/>
        <note>ligand shared between dimeric partners</note>
    </ligand>
</feature>
<feature type="binding site" evidence="1">
    <location>
        <begin position="300"/>
        <end position="306"/>
    </location>
    <ligand>
        <name>substrate</name>
    </ligand>
</feature>
<feature type="binding site" description="in other chain" evidence="1">
    <location>
        <position position="304"/>
    </location>
    <ligand>
        <name>IMP</name>
        <dbReference type="ChEBI" id="CHEBI:58053"/>
        <note>ligand shared between dimeric partners</note>
    </ligand>
</feature>
<feature type="binding site" evidence="1">
    <location>
        <position position="306"/>
    </location>
    <ligand>
        <name>GTP</name>
        <dbReference type="ChEBI" id="CHEBI:37565"/>
    </ligand>
</feature>
<feature type="binding site" evidence="1">
    <location>
        <begin position="332"/>
        <end position="334"/>
    </location>
    <ligand>
        <name>GTP</name>
        <dbReference type="ChEBI" id="CHEBI:37565"/>
    </ligand>
</feature>
<feature type="binding site" evidence="1">
    <location>
        <begin position="414"/>
        <end position="416"/>
    </location>
    <ligand>
        <name>GTP</name>
        <dbReference type="ChEBI" id="CHEBI:37565"/>
    </ligand>
</feature>
<reference key="1">
    <citation type="journal article" date="2008" name="BMC Genomics">
        <title>Genome sequence and rapid evolution of the rice pathogen Xanthomonas oryzae pv. oryzae PXO99A.</title>
        <authorList>
            <person name="Salzberg S.L."/>
            <person name="Sommer D.D."/>
            <person name="Schatz M.C."/>
            <person name="Phillippy A.M."/>
            <person name="Rabinowicz P.D."/>
            <person name="Tsuge S."/>
            <person name="Furutani A."/>
            <person name="Ochiai H."/>
            <person name="Delcher A.L."/>
            <person name="Kelley D."/>
            <person name="Madupu R."/>
            <person name="Puiu D."/>
            <person name="Radune D."/>
            <person name="Shumway M."/>
            <person name="Trapnell C."/>
            <person name="Aparna G."/>
            <person name="Jha G."/>
            <person name="Pandey A."/>
            <person name="Patil P.B."/>
            <person name="Ishihara H."/>
            <person name="Meyer D.F."/>
            <person name="Szurek B."/>
            <person name="Verdier V."/>
            <person name="Koebnik R."/>
            <person name="Dow J.M."/>
            <person name="Ryan R.P."/>
            <person name="Hirata H."/>
            <person name="Tsuyumu S."/>
            <person name="Won Lee S."/>
            <person name="Seo Y.-S."/>
            <person name="Sriariyanum M."/>
            <person name="Ronald P.C."/>
            <person name="Sonti R.V."/>
            <person name="Van Sluys M.-A."/>
            <person name="Leach J.E."/>
            <person name="White F.F."/>
            <person name="Bogdanove A.J."/>
        </authorList>
    </citation>
    <scope>NUCLEOTIDE SEQUENCE [LARGE SCALE GENOMIC DNA]</scope>
    <source>
        <strain>PXO99A</strain>
    </source>
</reference>
<keyword id="KW-0963">Cytoplasm</keyword>
<keyword id="KW-0342">GTP-binding</keyword>
<keyword id="KW-0436">Ligase</keyword>
<keyword id="KW-0460">Magnesium</keyword>
<keyword id="KW-0479">Metal-binding</keyword>
<keyword id="KW-0547">Nucleotide-binding</keyword>
<keyword id="KW-0658">Purine biosynthesis</keyword>
<dbReference type="EC" id="6.3.4.4" evidence="1"/>
<dbReference type="EMBL" id="CP000967">
    <property type="protein sequence ID" value="ACD60915.1"/>
    <property type="molecule type" value="Genomic_DNA"/>
</dbReference>
<dbReference type="RefSeq" id="WP_012446024.1">
    <property type="nucleotide sequence ID" value="NC_010717.2"/>
</dbReference>
<dbReference type="SMR" id="B2SNJ3"/>
<dbReference type="KEGG" id="xop:PXO_02633"/>
<dbReference type="eggNOG" id="COG0104">
    <property type="taxonomic scope" value="Bacteria"/>
</dbReference>
<dbReference type="HOGENOM" id="CLU_029848_0_0_6"/>
<dbReference type="UniPathway" id="UPA00075">
    <property type="reaction ID" value="UER00335"/>
</dbReference>
<dbReference type="Proteomes" id="UP000001740">
    <property type="component" value="Chromosome"/>
</dbReference>
<dbReference type="GO" id="GO:0005737">
    <property type="term" value="C:cytoplasm"/>
    <property type="evidence" value="ECO:0007669"/>
    <property type="project" value="UniProtKB-SubCell"/>
</dbReference>
<dbReference type="GO" id="GO:0004019">
    <property type="term" value="F:adenylosuccinate synthase activity"/>
    <property type="evidence" value="ECO:0007669"/>
    <property type="project" value="UniProtKB-UniRule"/>
</dbReference>
<dbReference type="GO" id="GO:0005525">
    <property type="term" value="F:GTP binding"/>
    <property type="evidence" value="ECO:0007669"/>
    <property type="project" value="UniProtKB-UniRule"/>
</dbReference>
<dbReference type="GO" id="GO:0000287">
    <property type="term" value="F:magnesium ion binding"/>
    <property type="evidence" value="ECO:0007669"/>
    <property type="project" value="UniProtKB-UniRule"/>
</dbReference>
<dbReference type="GO" id="GO:0044208">
    <property type="term" value="P:'de novo' AMP biosynthetic process"/>
    <property type="evidence" value="ECO:0007669"/>
    <property type="project" value="UniProtKB-UniRule"/>
</dbReference>
<dbReference type="GO" id="GO:0046040">
    <property type="term" value="P:IMP metabolic process"/>
    <property type="evidence" value="ECO:0007669"/>
    <property type="project" value="TreeGrafter"/>
</dbReference>
<dbReference type="CDD" id="cd03108">
    <property type="entry name" value="AdSS"/>
    <property type="match status" value="1"/>
</dbReference>
<dbReference type="FunFam" id="1.10.300.10:FF:000001">
    <property type="entry name" value="Adenylosuccinate synthetase"/>
    <property type="match status" value="1"/>
</dbReference>
<dbReference type="FunFam" id="3.90.170.10:FF:000001">
    <property type="entry name" value="Adenylosuccinate synthetase"/>
    <property type="match status" value="1"/>
</dbReference>
<dbReference type="Gene3D" id="3.40.440.10">
    <property type="entry name" value="Adenylosuccinate Synthetase, subunit A, domain 1"/>
    <property type="match status" value="1"/>
</dbReference>
<dbReference type="Gene3D" id="1.10.300.10">
    <property type="entry name" value="Adenylosuccinate Synthetase, subunit A, domain 2"/>
    <property type="match status" value="1"/>
</dbReference>
<dbReference type="Gene3D" id="3.90.170.10">
    <property type="entry name" value="Adenylosuccinate Synthetase, subunit A, domain 3"/>
    <property type="match status" value="1"/>
</dbReference>
<dbReference type="HAMAP" id="MF_00011">
    <property type="entry name" value="Adenylosucc_synth"/>
    <property type="match status" value="1"/>
</dbReference>
<dbReference type="InterPro" id="IPR018220">
    <property type="entry name" value="Adenylosuccin_syn_GTP-bd"/>
</dbReference>
<dbReference type="InterPro" id="IPR033128">
    <property type="entry name" value="Adenylosuccin_syn_Lys_AS"/>
</dbReference>
<dbReference type="InterPro" id="IPR042109">
    <property type="entry name" value="Adenylosuccinate_synth_dom1"/>
</dbReference>
<dbReference type="InterPro" id="IPR042110">
    <property type="entry name" value="Adenylosuccinate_synth_dom2"/>
</dbReference>
<dbReference type="InterPro" id="IPR042111">
    <property type="entry name" value="Adenylosuccinate_synth_dom3"/>
</dbReference>
<dbReference type="InterPro" id="IPR001114">
    <property type="entry name" value="Adenylosuccinate_synthetase"/>
</dbReference>
<dbReference type="InterPro" id="IPR027417">
    <property type="entry name" value="P-loop_NTPase"/>
</dbReference>
<dbReference type="NCBIfam" id="NF002223">
    <property type="entry name" value="PRK01117.1"/>
    <property type="match status" value="1"/>
</dbReference>
<dbReference type="NCBIfam" id="TIGR00184">
    <property type="entry name" value="purA"/>
    <property type="match status" value="1"/>
</dbReference>
<dbReference type="PANTHER" id="PTHR11846">
    <property type="entry name" value="ADENYLOSUCCINATE SYNTHETASE"/>
    <property type="match status" value="1"/>
</dbReference>
<dbReference type="PANTHER" id="PTHR11846:SF0">
    <property type="entry name" value="ADENYLOSUCCINATE SYNTHETASE"/>
    <property type="match status" value="1"/>
</dbReference>
<dbReference type="Pfam" id="PF00709">
    <property type="entry name" value="Adenylsucc_synt"/>
    <property type="match status" value="1"/>
</dbReference>
<dbReference type="SMART" id="SM00788">
    <property type="entry name" value="Adenylsucc_synt"/>
    <property type="match status" value="1"/>
</dbReference>
<dbReference type="SUPFAM" id="SSF52540">
    <property type="entry name" value="P-loop containing nucleoside triphosphate hydrolases"/>
    <property type="match status" value="1"/>
</dbReference>
<dbReference type="PROSITE" id="PS01266">
    <property type="entry name" value="ADENYLOSUCCIN_SYN_1"/>
    <property type="match status" value="1"/>
</dbReference>
<dbReference type="PROSITE" id="PS00513">
    <property type="entry name" value="ADENYLOSUCCIN_SYN_2"/>
    <property type="match status" value="1"/>
</dbReference>
<comment type="function">
    <text evidence="1">Plays an important role in the de novo pathway of purine nucleotide biosynthesis. Catalyzes the first committed step in the biosynthesis of AMP from IMP.</text>
</comment>
<comment type="catalytic activity">
    <reaction evidence="1">
        <text>IMP + L-aspartate + GTP = N(6)-(1,2-dicarboxyethyl)-AMP + GDP + phosphate + 2 H(+)</text>
        <dbReference type="Rhea" id="RHEA:15753"/>
        <dbReference type="ChEBI" id="CHEBI:15378"/>
        <dbReference type="ChEBI" id="CHEBI:29991"/>
        <dbReference type="ChEBI" id="CHEBI:37565"/>
        <dbReference type="ChEBI" id="CHEBI:43474"/>
        <dbReference type="ChEBI" id="CHEBI:57567"/>
        <dbReference type="ChEBI" id="CHEBI:58053"/>
        <dbReference type="ChEBI" id="CHEBI:58189"/>
        <dbReference type="EC" id="6.3.4.4"/>
    </reaction>
</comment>
<comment type="cofactor">
    <cofactor evidence="1">
        <name>Mg(2+)</name>
        <dbReference type="ChEBI" id="CHEBI:18420"/>
    </cofactor>
    <text evidence="1">Binds 1 Mg(2+) ion per subunit.</text>
</comment>
<comment type="pathway">
    <text evidence="1">Purine metabolism; AMP biosynthesis via de novo pathway; AMP from IMP: step 1/2.</text>
</comment>
<comment type="subunit">
    <text evidence="1">Homodimer.</text>
</comment>
<comment type="subcellular location">
    <subcellularLocation>
        <location evidence="1">Cytoplasm</location>
    </subcellularLocation>
</comment>
<comment type="similarity">
    <text evidence="1">Belongs to the adenylosuccinate synthetase family.</text>
</comment>